<protein>
    <recommendedName>
        <fullName evidence="1">Ribosomal RNA large subunit methyltransferase H</fullName>
        <ecNumber evidence="1">2.1.1.177</ecNumber>
    </recommendedName>
    <alternativeName>
        <fullName evidence="1">23S rRNA (pseudouridine1915-N3)-methyltransferase</fullName>
    </alternativeName>
    <alternativeName>
        <fullName evidence="1">23S rRNA m3Psi1915 methyltransferase</fullName>
    </alternativeName>
    <alternativeName>
        <fullName evidence="1">rRNA (pseudouridine-N3-)-methyltransferase RlmH</fullName>
    </alternativeName>
</protein>
<organism>
    <name type="scientific">Bacillus anthracis (strain CDC 684 / NRRL 3495)</name>
    <dbReference type="NCBI Taxonomy" id="568206"/>
    <lineage>
        <taxon>Bacteria</taxon>
        <taxon>Bacillati</taxon>
        <taxon>Bacillota</taxon>
        <taxon>Bacilli</taxon>
        <taxon>Bacillales</taxon>
        <taxon>Bacillaceae</taxon>
        <taxon>Bacillus</taxon>
        <taxon>Bacillus cereus group</taxon>
    </lineage>
</organism>
<keyword id="KW-0963">Cytoplasm</keyword>
<keyword id="KW-0489">Methyltransferase</keyword>
<keyword id="KW-0698">rRNA processing</keyword>
<keyword id="KW-0949">S-adenosyl-L-methionine</keyword>
<keyword id="KW-0808">Transferase</keyword>
<feature type="chain" id="PRO_1000199810" description="Ribosomal RNA large subunit methyltransferase H">
    <location>
        <begin position="1"/>
        <end position="159"/>
    </location>
</feature>
<feature type="binding site" evidence="1">
    <location>
        <position position="76"/>
    </location>
    <ligand>
        <name>S-adenosyl-L-methionine</name>
        <dbReference type="ChEBI" id="CHEBI:59789"/>
    </ligand>
</feature>
<feature type="binding site" evidence="1">
    <location>
        <position position="108"/>
    </location>
    <ligand>
        <name>S-adenosyl-L-methionine</name>
        <dbReference type="ChEBI" id="CHEBI:59789"/>
    </ligand>
</feature>
<feature type="binding site" evidence="1">
    <location>
        <begin position="127"/>
        <end position="132"/>
    </location>
    <ligand>
        <name>S-adenosyl-L-methionine</name>
        <dbReference type="ChEBI" id="CHEBI:59789"/>
    </ligand>
</feature>
<reference key="1">
    <citation type="submission" date="2008-10" db="EMBL/GenBank/DDBJ databases">
        <title>Genome sequence of Bacillus anthracis str. CDC 684.</title>
        <authorList>
            <person name="Dodson R.J."/>
            <person name="Munk A.C."/>
            <person name="Brettin T."/>
            <person name="Bruce D."/>
            <person name="Detter C."/>
            <person name="Tapia R."/>
            <person name="Han C."/>
            <person name="Sutton G."/>
            <person name="Sims D."/>
        </authorList>
    </citation>
    <scope>NUCLEOTIDE SEQUENCE [LARGE SCALE GENOMIC DNA]</scope>
    <source>
        <strain>CDC 684 / NRRL 3495</strain>
    </source>
</reference>
<evidence type="ECO:0000255" key="1">
    <source>
        <dbReference type="HAMAP-Rule" id="MF_00658"/>
    </source>
</evidence>
<gene>
    <name evidence="1" type="primary">rlmH</name>
    <name type="ordered locus">BAMEG_5756</name>
</gene>
<accession>C3LGR6</accession>
<comment type="function">
    <text evidence="1">Specifically methylates the pseudouridine at position 1915 (m3Psi1915) in 23S rRNA.</text>
</comment>
<comment type="catalytic activity">
    <reaction evidence="1">
        <text>pseudouridine(1915) in 23S rRNA + S-adenosyl-L-methionine = N(3)-methylpseudouridine(1915) in 23S rRNA + S-adenosyl-L-homocysteine + H(+)</text>
        <dbReference type="Rhea" id="RHEA:42752"/>
        <dbReference type="Rhea" id="RHEA-COMP:10221"/>
        <dbReference type="Rhea" id="RHEA-COMP:10222"/>
        <dbReference type="ChEBI" id="CHEBI:15378"/>
        <dbReference type="ChEBI" id="CHEBI:57856"/>
        <dbReference type="ChEBI" id="CHEBI:59789"/>
        <dbReference type="ChEBI" id="CHEBI:65314"/>
        <dbReference type="ChEBI" id="CHEBI:74486"/>
        <dbReference type="EC" id="2.1.1.177"/>
    </reaction>
</comment>
<comment type="subunit">
    <text evidence="1">Homodimer.</text>
</comment>
<comment type="subcellular location">
    <subcellularLocation>
        <location evidence="1">Cytoplasm</location>
    </subcellularLocation>
</comment>
<comment type="similarity">
    <text evidence="1">Belongs to the RNA methyltransferase RlmH family.</text>
</comment>
<dbReference type="EC" id="2.1.1.177" evidence="1"/>
<dbReference type="EMBL" id="CP001215">
    <property type="protein sequence ID" value="ACP16651.1"/>
    <property type="molecule type" value="Genomic_DNA"/>
</dbReference>
<dbReference type="RefSeq" id="WP_001027003.1">
    <property type="nucleotide sequence ID" value="NC_012581.1"/>
</dbReference>
<dbReference type="SMR" id="C3LGR6"/>
<dbReference type="GeneID" id="93005667"/>
<dbReference type="KEGG" id="bah:BAMEG_5756"/>
<dbReference type="HOGENOM" id="CLU_100552_0_0_9"/>
<dbReference type="GO" id="GO:0005737">
    <property type="term" value="C:cytoplasm"/>
    <property type="evidence" value="ECO:0007669"/>
    <property type="project" value="UniProtKB-SubCell"/>
</dbReference>
<dbReference type="GO" id="GO:0070038">
    <property type="term" value="F:rRNA (pseudouridine-N3-)-methyltransferase activity"/>
    <property type="evidence" value="ECO:0007669"/>
    <property type="project" value="UniProtKB-UniRule"/>
</dbReference>
<dbReference type="CDD" id="cd18081">
    <property type="entry name" value="RlmH-like"/>
    <property type="match status" value="1"/>
</dbReference>
<dbReference type="Gene3D" id="3.40.1280.10">
    <property type="match status" value="1"/>
</dbReference>
<dbReference type="HAMAP" id="MF_00658">
    <property type="entry name" value="23SrRNA_methyltr_H"/>
    <property type="match status" value="1"/>
</dbReference>
<dbReference type="InterPro" id="IPR029028">
    <property type="entry name" value="Alpha/beta_knot_MTases"/>
</dbReference>
<dbReference type="InterPro" id="IPR003742">
    <property type="entry name" value="RlmH-like"/>
</dbReference>
<dbReference type="InterPro" id="IPR029026">
    <property type="entry name" value="tRNA_m1G_MTases_N"/>
</dbReference>
<dbReference type="NCBIfam" id="NF000985">
    <property type="entry name" value="PRK00103.1-3"/>
    <property type="match status" value="1"/>
</dbReference>
<dbReference type="NCBIfam" id="TIGR00246">
    <property type="entry name" value="tRNA_RlmH_YbeA"/>
    <property type="match status" value="1"/>
</dbReference>
<dbReference type="PANTHER" id="PTHR33603">
    <property type="entry name" value="METHYLTRANSFERASE"/>
    <property type="match status" value="1"/>
</dbReference>
<dbReference type="PANTHER" id="PTHR33603:SF1">
    <property type="entry name" value="RIBOSOMAL RNA LARGE SUBUNIT METHYLTRANSFERASE H"/>
    <property type="match status" value="1"/>
</dbReference>
<dbReference type="Pfam" id="PF02590">
    <property type="entry name" value="SPOUT_MTase"/>
    <property type="match status" value="1"/>
</dbReference>
<dbReference type="PIRSF" id="PIRSF004505">
    <property type="entry name" value="MT_bac"/>
    <property type="match status" value="1"/>
</dbReference>
<dbReference type="SUPFAM" id="SSF75217">
    <property type="entry name" value="alpha/beta knot"/>
    <property type="match status" value="1"/>
</dbReference>
<proteinExistence type="inferred from homology"/>
<name>RLMH_BACAC</name>
<sequence>MNISIISIGKLKEKYLKQGIAEYLKRLSAYAKVEVIELPDEKAPENLSEAEMLIVKEKEGIRILDKISDDTHVIALAIEGKQKSSEEFAVSLDRLATYGKSKVAFVIGGSLGLSSEVMKRSNESLSFSKMTLPHQLMRLVLLEQVYRAFRINRGEPYHK</sequence>